<protein>
    <recommendedName>
        <fullName>Putative primase</fullName>
        <ecNumber>2.7.7.-</ecNumber>
    </recommendedName>
</protein>
<organismHost>
    <name type="scientific">Magallana gigas</name>
    <name type="common">Pacific oyster</name>
    <name type="synonym">Crassostrea gigas</name>
    <dbReference type="NCBI Taxonomy" id="29159"/>
</organismHost>
<organismHost>
    <name type="scientific">Pecten maximus</name>
    <name type="common">King scallop</name>
    <name type="synonym">Pilgrim's clam</name>
    <dbReference type="NCBI Taxonomy" id="6579"/>
</organismHost>
<feature type="chain" id="PRO_0000385036" description="Putative primase">
    <location>
        <begin position="1"/>
        <end position="1181"/>
    </location>
</feature>
<feature type="region of interest" description="Disordered" evidence="2">
    <location>
        <begin position="1141"/>
        <end position="1181"/>
    </location>
</feature>
<feature type="compositionally biased region" description="Acidic residues" evidence="2">
    <location>
        <begin position="1163"/>
        <end position="1181"/>
    </location>
</feature>
<accession>Q6R7L6</accession>
<proteinExistence type="inferred from homology"/>
<gene>
    <name type="ORF">ORF7</name>
</gene>
<reference key="1">
    <citation type="journal article" date="2005" name="J. Gen. Virol.">
        <title>A novel class of herpesvirus with bivalve hosts.</title>
        <authorList>
            <person name="Davison A.J."/>
            <person name="Trus B.L."/>
            <person name="Cheng N."/>
            <person name="Steven A.C."/>
            <person name="Watson M.S."/>
            <person name="Cunningham C."/>
            <person name="Le Deuff R.M."/>
            <person name="Renault T."/>
        </authorList>
    </citation>
    <scope>NUCLEOTIDE SEQUENCE [LARGE SCALE GENOMIC DNA]</scope>
</reference>
<dbReference type="EC" id="2.7.7.-"/>
<dbReference type="EMBL" id="AY509253">
    <property type="protein sequence ID" value="AAS00899.1"/>
    <property type="molecule type" value="Genomic_DNA"/>
</dbReference>
<dbReference type="RefSeq" id="YP_024552.1">
    <property type="nucleotide sequence ID" value="NC_005881.2"/>
</dbReference>
<dbReference type="KEGG" id="vg:2948143"/>
<dbReference type="Proteomes" id="UP000007021">
    <property type="component" value="Segment"/>
</dbReference>
<dbReference type="GO" id="GO:0003899">
    <property type="term" value="F:DNA-directed RNA polymerase activity"/>
    <property type="evidence" value="ECO:0007669"/>
    <property type="project" value="InterPro"/>
</dbReference>
<dbReference type="GO" id="GO:0006269">
    <property type="term" value="P:DNA replication, synthesis of primer"/>
    <property type="evidence" value="ECO:0007669"/>
    <property type="project" value="InterPro"/>
</dbReference>
<dbReference type="Gene3D" id="3.40.50.300">
    <property type="entry name" value="P-loop containing nucleotide triphosphate hydrolases"/>
    <property type="match status" value="1"/>
</dbReference>
<dbReference type="InterPro" id="IPR002755">
    <property type="entry name" value="DNA_primase_S"/>
</dbReference>
<dbReference type="InterPro" id="IPR027417">
    <property type="entry name" value="P-loop_NTPase"/>
</dbReference>
<dbReference type="Pfam" id="PF01896">
    <property type="entry name" value="DNA_primase_S"/>
    <property type="match status" value="1"/>
</dbReference>
<dbReference type="SUPFAM" id="SSF52540">
    <property type="entry name" value="P-loop containing nucleoside triphosphate hydrolases"/>
    <property type="match status" value="1"/>
</dbReference>
<comment type="function">
    <text evidence="1">Synthesizes small RNA primers for the Okazaki fragments on both template strands at replication forks during viral DNA synthesis.</text>
</comment>
<comment type="similarity">
    <text evidence="3">Belongs to the eukaryotic-type primase small subunit family.</text>
</comment>
<keyword id="KW-0235">DNA replication</keyword>
<keyword id="KW-1185">Reference proteome</keyword>
<keyword id="KW-0808">Transferase</keyword>
<sequence>MSNSEKQTLAIEWFKNMSEIKKSRENGLVSKVIAKDVHVLSGAKKYGILWKGKEGEMIDHIAKGQNEHLYEMIDFNSPARLFFDMDFKSKDEFGFGCDIPPNQVVVMFMEELQLFVNKLIGHDSGKFNAKEVLITQCKRLDRPDKHSFHLVYPKIVFRNITQMRAFVLSFGHYLFEEKHMMSLAFQKKGKNRSLGRAVFDMSPYTRDRLFRLMGQSKMGEPYENTLRPVKIQEVYETSNNFFDNLIDDNGISSHAQIITLRYSELENISDYMVQPCSFLDMDATPPSTTLGDLIHNSVLKNYGNVPLKTYVAAKQDRRGVTITLLGNNNKTPGNLKSAKDNILPVDWHTLIKEEFRGKEINIENDEQFLEFFTARELKEADYVYYYLNFISDICHFIPDKTMLTWMNGCDDYVSTRSERKLFYAKESSSKKPITGRFALSLLENVYGVDNVNDLRNPVPKPIGDFKNVKRTVMTTEEWEPIEARDLRSRILTEQNKDLKTNNYINGAITMDFEKEEEYAKIGVPEDEEGNRIEMAQRFNSKKRAYFISGQMGASKSSGTLESIVELVMKGMMKNVLIITPRIVLAKQTILKLFTVYKELLGDSKVKRDFKKTNDIDITAMFHKAYQDKEIRQVKEWCRGRINPEMEHCNICVSLINSIHRLNRAVYDTIIFDEPITCIDNFYIELHTKNSNENAAEVVANTISRRNAIVNRLTGFTMLSNQLFFIDAAFTPDSINLCKSLYYGEYSFIVSPREWNKHMRSEGVGDTTVKNTCKRINKENLEIRKRIRIVKTRSEDKSQMIQKEEVTYKIFREPQMICVYDKSLEKPIFQKIIDYKSKNKLLNTLLETICEGQKVVVYCSTQKESERLYHAVKGWTERKMSWIPRLILITGSTVKKEPGEVVNKIKDGDVIFTTSVLGVGTSISEEGLFDCAFMICKLSVGSPLLSDMIQLSARVRATKNRVLHMNISCGQFGVDCSKLTRELHSFQPANYMYGGFMDCLDITHRNRRLFHHVCISNYTIARETMLSEITDALGHVKDATLSRISPEYIYVKDVDHRFLATRDITEQRQLAQKLDVLDCRMEHTEEFVDFVGLYKNKKEGRRVVAKINVPKKNELLHEFWQKSKIGREGYTPVTHKAYSLKRSHSTMVEHDMDDDESTNKKQELEEEDEECIDIDEYNNERF</sequence>
<name>PRIM_OSHVF</name>
<evidence type="ECO:0000250" key="1"/>
<evidence type="ECO:0000256" key="2">
    <source>
        <dbReference type="SAM" id="MobiDB-lite"/>
    </source>
</evidence>
<evidence type="ECO:0000305" key="3"/>
<organism>
    <name type="scientific">Ostreid herpesvirus 1 (isolate France)</name>
    <name type="common">OsHV-1</name>
    <name type="synonym">Pacific oyster herpesvirus</name>
    <dbReference type="NCBI Taxonomy" id="654903"/>
    <lineage>
        <taxon>Viruses</taxon>
        <taxon>Duplodnaviria</taxon>
        <taxon>Heunggongvirae</taxon>
        <taxon>Peploviricota</taxon>
        <taxon>Herviviricetes</taxon>
        <taxon>Herpesvirales</taxon>
        <taxon>Malacoherpesviridae</taxon>
        <taxon>Ostreavirus</taxon>
        <taxon>Ostreavirus ostreidmalaco1</taxon>
        <taxon>Ostreid herpesvirus 1</taxon>
    </lineage>
</organism>